<dbReference type="EMBL" id="CP000828">
    <property type="protein sequence ID" value="ABW26883.1"/>
    <property type="molecule type" value="Genomic_DNA"/>
</dbReference>
<dbReference type="RefSeq" id="WP_012162386.1">
    <property type="nucleotide sequence ID" value="NC_009925.1"/>
</dbReference>
<dbReference type="SMR" id="B0CDF8"/>
<dbReference type="STRING" id="329726.AM1_1863"/>
<dbReference type="KEGG" id="amr:AM1_1863"/>
<dbReference type="eggNOG" id="COG1666">
    <property type="taxonomic scope" value="Bacteria"/>
</dbReference>
<dbReference type="HOGENOM" id="CLU_099839_0_0_3"/>
<dbReference type="OrthoDB" id="9801447at2"/>
<dbReference type="Proteomes" id="UP000000268">
    <property type="component" value="Chromosome"/>
</dbReference>
<dbReference type="GO" id="GO:0005829">
    <property type="term" value="C:cytosol"/>
    <property type="evidence" value="ECO:0007669"/>
    <property type="project" value="TreeGrafter"/>
</dbReference>
<dbReference type="GO" id="GO:0000166">
    <property type="term" value="F:nucleotide binding"/>
    <property type="evidence" value="ECO:0007669"/>
    <property type="project" value="TreeGrafter"/>
</dbReference>
<dbReference type="CDD" id="cd11740">
    <property type="entry name" value="YajQ_like"/>
    <property type="match status" value="1"/>
</dbReference>
<dbReference type="Gene3D" id="3.30.70.860">
    <property type="match status" value="1"/>
</dbReference>
<dbReference type="Gene3D" id="3.30.70.990">
    <property type="entry name" value="YajQ-like, domain 2"/>
    <property type="match status" value="1"/>
</dbReference>
<dbReference type="HAMAP" id="MF_00632">
    <property type="entry name" value="YajQ"/>
    <property type="match status" value="1"/>
</dbReference>
<dbReference type="InterPro" id="IPR007551">
    <property type="entry name" value="DUF520"/>
</dbReference>
<dbReference type="InterPro" id="IPR035571">
    <property type="entry name" value="UPF0234-like_C"/>
</dbReference>
<dbReference type="InterPro" id="IPR035570">
    <property type="entry name" value="UPF0234_N"/>
</dbReference>
<dbReference type="InterPro" id="IPR036183">
    <property type="entry name" value="YajQ-like_sf"/>
</dbReference>
<dbReference type="NCBIfam" id="NF003819">
    <property type="entry name" value="PRK05412.1"/>
    <property type="match status" value="1"/>
</dbReference>
<dbReference type="PANTHER" id="PTHR30476">
    <property type="entry name" value="UPF0234 PROTEIN YAJQ"/>
    <property type="match status" value="1"/>
</dbReference>
<dbReference type="PANTHER" id="PTHR30476:SF0">
    <property type="entry name" value="UPF0234 PROTEIN YAJQ"/>
    <property type="match status" value="1"/>
</dbReference>
<dbReference type="Pfam" id="PF04461">
    <property type="entry name" value="DUF520"/>
    <property type="match status" value="1"/>
</dbReference>
<dbReference type="SUPFAM" id="SSF89963">
    <property type="entry name" value="YajQ-like"/>
    <property type="match status" value="2"/>
</dbReference>
<name>Y1863_ACAM1</name>
<proteinExistence type="inferred from homology"/>
<reference key="1">
    <citation type="journal article" date="2008" name="Proc. Natl. Acad. Sci. U.S.A.">
        <title>Niche adaptation and genome expansion in the chlorophyll d-producing cyanobacterium Acaryochloris marina.</title>
        <authorList>
            <person name="Swingley W.D."/>
            <person name="Chen M."/>
            <person name="Cheung P.C."/>
            <person name="Conrad A.L."/>
            <person name="Dejesa L.C."/>
            <person name="Hao J."/>
            <person name="Honchak B.M."/>
            <person name="Karbach L.E."/>
            <person name="Kurdoglu A."/>
            <person name="Lahiri S."/>
            <person name="Mastrian S.D."/>
            <person name="Miyashita H."/>
            <person name="Page L."/>
            <person name="Ramakrishna P."/>
            <person name="Satoh S."/>
            <person name="Sattley W.M."/>
            <person name="Shimada Y."/>
            <person name="Taylor H.L."/>
            <person name="Tomo T."/>
            <person name="Tsuchiya T."/>
            <person name="Wang Z.T."/>
            <person name="Raymond J."/>
            <person name="Mimuro M."/>
            <person name="Blankenship R.E."/>
            <person name="Touchman J.W."/>
        </authorList>
    </citation>
    <scope>NUCLEOTIDE SEQUENCE [LARGE SCALE GENOMIC DNA]</scope>
    <source>
        <strain>MBIC 11017</strain>
    </source>
</reference>
<organism>
    <name type="scientific">Acaryochloris marina (strain MBIC 11017)</name>
    <dbReference type="NCBI Taxonomy" id="329726"/>
    <lineage>
        <taxon>Bacteria</taxon>
        <taxon>Bacillati</taxon>
        <taxon>Cyanobacteriota</taxon>
        <taxon>Cyanophyceae</taxon>
        <taxon>Acaryochloridales</taxon>
        <taxon>Acaryochloridaceae</taxon>
        <taxon>Acaryochloris</taxon>
    </lineage>
</organism>
<comment type="function">
    <text evidence="1">Nucleotide-binding protein.</text>
</comment>
<comment type="similarity">
    <text evidence="1">Belongs to the YajQ family.</text>
</comment>
<gene>
    <name type="ordered locus">AM1_1863</name>
</gene>
<protein>
    <recommendedName>
        <fullName evidence="1">Nucleotide-binding protein AM1_1863</fullName>
    </recommendedName>
</protein>
<sequence length="163" mass="18657">MASTCSFDIVSDFEWQELVNAIDQANREIKARYDLKDTKTEIKLDPTEITISTDSEFTLDAVHNVLQTKAVKRKLSLKIFDYGIIESASGNRVRQAIKLQKGIDTELAKKISKLIRTDYKKVQASIQGEVVRVSSKSKDDLQQVMQDLKQEDWPVALQFTNYR</sequence>
<accession>B0CDF8</accession>
<keyword id="KW-0547">Nucleotide-binding</keyword>
<keyword id="KW-1185">Reference proteome</keyword>
<feature type="chain" id="PRO_1000082620" description="Nucleotide-binding protein AM1_1863">
    <location>
        <begin position="1"/>
        <end position="163"/>
    </location>
</feature>
<evidence type="ECO:0000255" key="1">
    <source>
        <dbReference type="HAMAP-Rule" id="MF_00632"/>
    </source>
</evidence>